<keyword id="KW-0002">3D-structure</keyword>
<keyword id="KW-0119">Carbohydrate metabolism</keyword>
<keyword id="KW-0963">Cytoplasm</keyword>
<keyword id="KW-0903">Direct protein sequencing</keyword>
<keyword id="KW-0456">Lyase</keyword>
<keyword id="KW-1185">Reference proteome</keyword>
<keyword id="KW-0704">Schiff base</keyword>
<organism>
    <name type="scientific">Escherichia coli (strain K12)</name>
    <dbReference type="NCBI Taxonomy" id="83333"/>
    <lineage>
        <taxon>Bacteria</taxon>
        <taxon>Pseudomonadati</taxon>
        <taxon>Pseudomonadota</taxon>
        <taxon>Gammaproteobacteria</taxon>
        <taxon>Enterobacterales</taxon>
        <taxon>Enterobacteriaceae</taxon>
        <taxon>Escherichia</taxon>
    </lineage>
</organism>
<comment type="function">
    <text evidence="2 3 6 7">Catalyzes the reversible aldol cleavage of N-acetylneuraminic acid (sialic acid; Neu5Ac) to form pyruvate and N-acetylmannosamine (ManNAc) via a Schiff base intermediate (PubMed:12711733, PubMed:1646603, PubMed:24521460, PubMed:33895133). Experiments show the true substrate is aceneuramate (linearized Neu5Ac), which forms spontaneously at alkaline pH (PubMed:33895133). Linear aceneuramate can be provided by NanQ (PubMed:33895133). Can also cleave other substrates such as N-glycollylneuraminic acid (GcNeu), but not colominic acid or 2-oxocarboxylic acids such as 2-oxohexanoic acid, 2-oxo-octanoic acid, 2-oxo-3-deoxyoctanoic acid and 2-oxononanoic acid (PubMed:1646603).</text>
</comment>
<comment type="catalytic activity">
    <reaction evidence="2 3 6 7">
        <text>aceneuramate = aldehydo-N-acetyl-D-mannosamine + pyruvate</text>
        <dbReference type="Rhea" id="RHEA:23296"/>
        <dbReference type="ChEBI" id="CHEBI:15361"/>
        <dbReference type="ChEBI" id="CHEBI:17122"/>
        <dbReference type="ChEBI" id="CHEBI:173083"/>
        <dbReference type="EC" id="4.1.3.3"/>
    </reaction>
</comment>
<comment type="activity regulation">
    <text evidence="2 3 7 9">Inhibited by reduction with NaBH(4), and by Cu(2+) ions, p-chloromercuribenzoate and N-bromosuccinimide (PubMed:1646603). Inhibited by beta-hydroxypyruvate (PubMed:12711733, PubMed:9047371). Co(2+), Mn(2+) and Ni(2+) stimulate activity, perhaps by enhancing the opening of the substrate Neu5Ac (PubMed:33895133).</text>
</comment>
<comment type="biophysicochemical properties">
    <kinetics>
        <KM evidence="3">3.3 mM for N-acetylneuraminate</KM>
        <KM evidence="2">2.5 mM for N-acetylneuraminate</KM>
        <KM evidence="6">2.2 mM for N-acetylneuraminate</KM>
        <KM evidence="3">3.3 mM for N-glycollylneuraminate</KM>
        <Vmax evidence="3">71.4 umol/min/mg enzyme with N-acetylneuraminate as substrate</Vmax>
        <Vmax evidence="3">14.0 umol/min/mg enzyme with N-glycollylneuraminate as substrate</Vmax>
        <text evidence="2 6">kcat is 7.7 sec(-1) with N-acetylneuraminate as substrate (PubMed:12711733). kcat is 0.47 sec(-1) for the aldol condensation of L-aspartate beta-semialdehyde and pyruvate (at pH 7.0) (PubMed:12711733). kcat is 0.27 sec(-1) for the aldol condensation of L-aspartate beta-semialdehyde and pyruvate (at pH 8.0) (PubMed:12711733). kcat is 250 min(-1) with N-acetylneuraminate as substrate (PubMed:24521460).</text>
    </kinetics>
    <phDependence>
        <text evidence="3">Optimum pH is 6.5-7.0.</text>
    </phDependence>
    <temperatureDependence>
        <text evidence="3">Optimum temperature is 80 degrees Celsius.</text>
    </temperatureDependence>
</comment>
<comment type="pathway">
    <text evidence="15">Amino-sugar metabolism; N-acetylneuraminate degradation; D-fructose 6-phosphate from N-acetylneuraminate: step 1/5.</text>
</comment>
<comment type="subunit">
    <text evidence="2 4 6 8 9">Homotetramer.</text>
</comment>
<comment type="subcellular location">
    <subcellularLocation>
        <location evidence="15">Cytoplasm</location>
    </subcellularLocation>
</comment>
<comment type="induction">
    <text evidence="5">Negatively regulated by the transcriptional repressor NanR. Induced by N-acetylneuraminate, via inactivation of NanR.</text>
</comment>
<comment type="similarity">
    <text evidence="1 15">Belongs to the DapA family. NanA subfamily.</text>
</comment>
<proteinExistence type="evidence at protein level"/>
<dbReference type="EC" id="4.1.3.3" evidence="2 3 6 7"/>
<dbReference type="EMBL" id="X03345">
    <property type="protein sequence ID" value="CAA27051.1"/>
    <property type="molecule type" value="Genomic_DNA"/>
</dbReference>
<dbReference type="EMBL" id="D00067">
    <property type="protein sequence ID" value="BAA00046.1"/>
    <property type="molecule type" value="Genomic_DNA"/>
</dbReference>
<dbReference type="EMBL" id="U18997">
    <property type="protein sequence ID" value="AAA58027.1"/>
    <property type="molecule type" value="Genomic_DNA"/>
</dbReference>
<dbReference type="EMBL" id="U00096">
    <property type="protein sequence ID" value="AAC76257.1"/>
    <property type="molecule type" value="Genomic_DNA"/>
</dbReference>
<dbReference type="EMBL" id="AP009048">
    <property type="protein sequence ID" value="BAE77268.1"/>
    <property type="molecule type" value="Genomic_DNA"/>
</dbReference>
<dbReference type="PIR" id="JP0002">
    <property type="entry name" value="WZECN"/>
</dbReference>
<dbReference type="RefSeq" id="NP_417692.1">
    <property type="nucleotide sequence ID" value="NC_000913.3"/>
</dbReference>
<dbReference type="RefSeq" id="WP_000224714.1">
    <property type="nucleotide sequence ID" value="NZ_STEB01000012.1"/>
</dbReference>
<dbReference type="PDB" id="1FDY">
    <property type="method" value="X-ray"/>
    <property type="resolution" value="2.45 A"/>
    <property type="chains" value="A/B/C/D=1-297"/>
</dbReference>
<dbReference type="PDB" id="1FDZ">
    <property type="method" value="X-ray"/>
    <property type="resolution" value="2.60 A"/>
    <property type="chains" value="A/B/C/D=1-297"/>
</dbReference>
<dbReference type="PDB" id="1HL2">
    <property type="method" value="X-ray"/>
    <property type="resolution" value="1.80 A"/>
    <property type="chains" value="A/B/C/D=1-297"/>
</dbReference>
<dbReference type="PDB" id="1NAL">
    <property type="method" value="X-ray"/>
    <property type="resolution" value="2.20 A"/>
    <property type="chains" value="1/2/3/4=1-297"/>
</dbReference>
<dbReference type="PDB" id="2WKJ">
    <property type="method" value="X-ray"/>
    <property type="resolution" value="1.45 A"/>
    <property type="chains" value="A/B/C/D=2-296"/>
</dbReference>
<dbReference type="PDB" id="2WNN">
    <property type="method" value="X-ray"/>
    <property type="resolution" value="1.65 A"/>
    <property type="chains" value="A/B/C/D=2-296"/>
</dbReference>
<dbReference type="PDB" id="2WNQ">
    <property type="method" value="X-ray"/>
    <property type="resolution" value="1.80 A"/>
    <property type="chains" value="A/B/C/D=2-297"/>
</dbReference>
<dbReference type="PDB" id="2WNZ">
    <property type="method" value="X-ray"/>
    <property type="resolution" value="1.85 A"/>
    <property type="chains" value="A/B/C/D=2-297"/>
</dbReference>
<dbReference type="PDB" id="2WO5">
    <property type="method" value="X-ray"/>
    <property type="resolution" value="2.20 A"/>
    <property type="chains" value="A/B/C/D=2-297"/>
</dbReference>
<dbReference type="PDB" id="2WPB">
    <property type="method" value="X-ray"/>
    <property type="resolution" value="2.05 A"/>
    <property type="chains" value="A/B/C/D=2-297"/>
</dbReference>
<dbReference type="PDB" id="2XFW">
    <property type="method" value="X-ray"/>
    <property type="resolution" value="1.65 A"/>
    <property type="chains" value="A/B/C/D=2-297"/>
</dbReference>
<dbReference type="PDB" id="2YGY">
    <property type="method" value="X-ray"/>
    <property type="resolution" value="1.90 A"/>
    <property type="chains" value="A/B/C/D=2-297"/>
</dbReference>
<dbReference type="PDB" id="3LBC">
    <property type="method" value="X-ray"/>
    <property type="resolution" value="1.85 A"/>
    <property type="chains" value="A/B/C/D=1-297"/>
</dbReference>
<dbReference type="PDB" id="3LBM">
    <property type="method" value="X-ray"/>
    <property type="resolution" value="1.48 A"/>
    <property type="chains" value="A/B/C/D=1-297"/>
</dbReference>
<dbReference type="PDB" id="3LCF">
    <property type="method" value="X-ray"/>
    <property type="resolution" value="1.86 A"/>
    <property type="chains" value="A/B/C/D=1-297"/>
</dbReference>
<dbReference type="PDB" id="3LCG">
    <property type="method" value="X-ray"/>
    <property type="resolution" value="1.78 A"/>
    <property type="chains" value="A/B/C/D=1-297"/>
</dbReference>
<dbReference type="PDB" id="3LCH">
    <property type="method" value="X-ray"/>
    <property type="resolution" value="2.04 A"/>
    <property type="chains" value="A/B/C/D=1-297"/>
</dbReference>
<dbReference type="PDB" id="3LCI">
    <property type="method" value="X-ray"/>
    <property type="resolution" value="2.12 A"/>
    <property type="chains" value="A/B/C/D=1-297"/>
</dbReference>
<dbReference type="PDB" id="3LCL">
    <property type="method" value="X-ray"/>
    <property type="resolution" value="1.83 A"/>
    <property type="chains" value="A/B/C/D=1-297"/>
</dbReference>
<dbReference type="PDB" id="3LCW">
    <property type="method" value="X-ray"/>
    <property type="resolution" value="2.35 A"/>
    <property type="chains" value="A/B/C/D=1-297"/>
</dbReference>
<dbReference type="PDB" id="3LCX">
    <property type="method" value="X-ray"/>
    <property type="resolution" value="1.98 A"/>
    <property type="chains" value="A/B/C/D=1-297"/>
</dbReference>
<dbReference type="PDB" id="4BWL">
    <property type="method" value="X-ray"/>
    <property type="resolution" value="2.00 A"/>
    <property type="chains" value="A/B/C/D=2-297"/>
</dbReference>
<dbReference type="PDB" id="4UUI">
    <property type="method" value="X-ray"/>
    <property type="resolution" value="1.79 A"/>
    <property type="chains" value="A/B/C/D=2-297"/>
</dbReference>
<dbReference type="PDBsum" id="1FDY"/>
<dbReference type="PDBsum" id="1FDZ"/>
<dbReference type="PDBsum" id="1HL2"/>
<dbReference type="PDBsum" id="1NAL"/>
<dbReference type="PDBsum" id="2WKJ"/>
<dbReference type="PDBsum" id="2WNN"/>
<dbReference type="PDBsum" id="2WNQ"/>
<dbReference type="PDBsum" id="2WNZ"/>
<dbReference type="PDBsum" id="2WO5"/>
<dbReference type="PDBsum" id="2WPB"/>
<dbReference type="PDBsum" id="2XFW"/>
<dbReference type="PDBsum" id="2YGY"/>
<dbReference type="PDBsum" id="3LBC"/>
<dbReference type="PDBsum" id="3LBM"/>
<dbReference type="PDBsum" id="3LCF"/>
<dbReference type="PDBsum" id="3LCG"/>
<dbReference type="PDBsum" id="3LCH"/>
<dbReference type="PDBsum" id="3LCI"/>
<dbReference type="PDBsum" id="3LCL"/>
<dbReference type="PDBsum" id="3LCW"/>
<dbReference type="PDBsum" id="3LCX"/>
<dbReference type="PDBsum" id="4BWL"/>
<dbReference type="PDBsum" id="4UUI"/>
<dbReference type="SMR" id="P0A6L4"/>
<dbReference type="BioGRID" id="4262442">
    <property type="interactions" value="349"/>
</dbReference>
<dbReference type="DIP" id="DIP-10302N"/>
<dbReference type="FunCoup" id="P0A6L4">
    <property type="interactions" value="232"/>
</dbReference>
<dbReference type="IntAct" id="P0A6L4">
    <property type="interactions" value="5"/>
</dbReference>
<dbReference type="STRING" id="511145.b3225"/>
<dbReference type="jPOST" id="P0A6L4"/>
<dbReference type="PaxDb" id="511145-b3225"/>
<dbReference type="EnsemblBacteria" id="AAC76257">
    <property type="protein sequence ID" value="AAC76257"/>
    <property type="gene ID" value="b3225"/>
</dbReference>
<dbReference type="GeneID" id="93778761"/>
<dbReference type="GeneID" id="947742"/>
<dbReference type="KEGG" id="ecj:JW3194"/>
<dbReference type="KEGG" id="eco:b3225"/>
<dbReference type="KEGG" id="ecoc:C3026_17545"/>
<dbReference type="PATRIC" id="fig|1411691.4.peg.3503"/>
<dbReference type="EchoBASE" id="EB0631"/>
<dbReference type="eggNOG" id="COG0329">
    <property type="taxonomic scope" value="Bacteria"/>
</dbReference>
<dbReference type="HOGENOM" id="CLU_049343_6_0_6"/>
<dbReference type="InParanoid" id="P0A6L4"/>
<dbReference type="OMA" id="YWNAISA"/>
<dbReference type="OrthoDB" id="199953at2"/>
<dbReference type="PhylomeDB" id="P0A6L4"/>
<dbReference type="BioCyc" id="EcoCyc:ACNEULY-MONOMER"/>
<dbReference type="BioCyc" id="MetaCyc:ACNEULY-MONOMER"/>
<dbReference type="BRENDA" id="4.1.3.3">
    <property type="organism ID" value="2026"/>
</dbReference>
<dbReference type="SABIO-RK" id="P0A6L4"/>
<dbReference type="UniPathway" id="UPA00629">
    <property type="reaction ID" value="UER00680"/>
</dbReference>
<dbReference type="EvolutionaryTrace" id="P0A6L4"/>
<dbReference type="PRO" id="PR:P0A6L4"/>
<dbReference type="Proteomes" id="UP000000625">
    <property type="component" value="Chromosome"/>
</dbReference>
<dbReference type="GO" id="GO:0005829">
    <property type="term" value="C:cytosol"/>
    <property type="evidence" value="ECO:0000314"/>
    <property type="project" value="EcoCyc"/>
</dbReference>
<dbReference type="GO" id="GO:0042802">
    <property type="term" value="F:identical protein binding"/>
    <property type="evidence" value="ECO:0000314"/>
    <property type="project" value="EcoCyc"/>
</dbReference>
<dbReference type="GO" id="GO:0008747">
    <property type="term" value="F:N-acetylneuraminate lyase activity"/>
    <property type="evidence" value="ECO:0000314"/>
    <property type="project" value="EcoCyc"/>
</dbReference>
<dbReference type="GO" id="GO:0005975">
    <property type="term" value="P:carbohydrate metabolic process"/>
    <property type="evidence" value="ECO:0007669"/>
    <property type="project" value="UniProtKB-UniRule"/>
</dbReference>
<dbReference type="GO" id="GO:0019262">
    <property type="term" value="P:N-acetylneuraminate catabolic process"/>
    <property type="evidence" value="ECO:0000315"/>
    <property type="project" value="EcoCyc"/>
</dbReference>
<dbReference type="GO" id="GO:0044010">
    <property type="term" value="P:single-species biofilm formation"/>
    <property type="evidence" value="ECO:0000315"/>
    <property type="project" value="EcoCyc"/>
</dbReference>
<dbReference type="CDD" id="cd00954">
    <property type="entry name" value="NAL"/>
    <property type="match status" value="1"/>
</dbReference>
<dbReference type="FunFam" id="3.20.20.70:FF:000039">
    <property type="entry name" value="N-acetylneuraminate lyase"/>
    <property type="match status" value="1"/>
</dbReference>
<dbReference type="Gene3D" id="3.20.20.70">
    <property type="entry name" value="Aldolase class I"/>
    <property type="match status" value="1"/>
</dbReference>
<dbReference type="HAMAP" id="MF_01237">
    <property type="entry name" value="N_acetylneuram_lyase"/>
    <property type="match status" value="1"/>
</dbReference>
<dbReference type="InterPro" id="IPR013785">
    <property type="entry name" value="Aldolase_TIM"/>
</dbReference>
<dbReference type="InterPro" id="IPR002220">
    <property type="entry name" value="DapA-like"/>
</dbReference>
<dbReference type="InterPro" id="IPR005264">
    <property type="entry name" value="NanA"/>
</dbReference>
<dbReference type="InterPro" id="IPR020625">
    <property type="entry name" value="Schiff_base-form_aldolases_AS"/>
</dbReference>
<dbReference type="InterPro" id="IPR020624">
    <property type="entry name" value="Schiff_base-form_aldolases_CS"/>
</dbReference>
<dbReference type="NCBIfam" id="TIGR00683">
    <property type="entry name" value="nanA"/>
    <property type="match status" value="1"/>
</dbReference>
<dbReference type="NCBIfam" id="NF003164">
    <property type="entry name" value="PRK04147.1"/>
    <property type="match status" value="1"/>
</dbReference>
<dbReference type="PANTHER" id="PTHR42849">
    <property type="entry name" value="N-ACETYLNEURAMINATE LYASE"/>
    <property type="match status" value="1"/>
</dbReference>
<dbReference type="PANTHER" id="PTHR42849:SF1">
    <property type="entry name" value="N-ACETYLNEURAMINATE LYASE"/>
    <property type="match status" value="1"/>
</dbReference>
<dbReference type="Pfam" id="PF00701">
    <property type="entry name" value="DHDPS"/>
    <property type="match status" value="1"/>
</dbReference>
<dbReference type="PIRSF" id="PIRSF001365">
    <property type="entry name" value="DHDPS"/>
    <property type="match status" value="1"/>
</dbReference>
<dbReference type="PRINTS" id="PR00146">
    <property type="entry name" value="DHPICSNTHASE"/>
</dbReference>
<dbReference type="SMART" id="SM01130">
    <property type="entry name" value="DHDPS"/>
    <property type="match status" value="1"/>
</dbReference>
<dbReference type="SUPFAM" id="SSF51569">
    <property type="entry name" value="Aldolase"/>
    <property type="match status" value="1"/>
</dbReference>
<dbReference type="PROSITE" id="PS00665">
    <property type="entry name" value="DHDPS_1"/>
    <property type="match status" value="1"/>
</dbReference>
<dbReference type="PROSITE" id="PS00666">
    <property type="entry name" value="DHDPS_2"/>
    <property type="match status" value="1"/>
</dbReference>
<evidence type="ECO:0000255" key="1">
    <source>
        <dbReference type="HAMAP-Rule" id="MF_01237"/>
    </source>
</evidence>
<evidence type="ECO:0000269" key="2">
    <source>
    </source>
</evidence>
<evidence type="ECO:0000269" key="3">
    <source>
    </source>
</evidence>
<evidence type="ECO:0000269" key="4">
    <source>
    </source>
</evidence>
<evidence type="ECO:0000269" key="5">
    <source>
    </source>
</evidence>
<evidence type="ECO:0000269" key="6">
    <source>
    </source>
</evidence>
<evidence type="ECO:0000269" key="7">
    <source>
    </source>
</evidence>
<evidence type="ECO:0000269" key="8">
    <source>
    </source>
</evidence>
<evidence type="ECO:0000269" key="9">
    <source>
    </source>
</evidence>
<evidence type="ECO:0000303" key="10">
    <source>
    </source>
</evidence>
<evidence type="ECO:0000303" key="11">
    <source>
    </source>
</evidence>
<evidence type="ECO:0000303" key="12">
    <source>
    </source>
</evidence>
<evidence type="ECO:0000303" key="13">
    <source>
    </source>
</evidence>
<evidence type="ECO:0000303" key="14">
    <source ref="2"/>
</evidence>
<evidence type="ECO:0000305" key="15"/>
<evidence type="ECO:0000305" key="16">
    <source>
    </source>
</evidence>
<evidence type="ECO:0000305" key="17">
    <source>
    </source>
</evidence>
<evidence type="ECO:0000305" key="18">
    <source>
    </source>
</evidence>
<evidence type="ECO:0007744" key="19">
    <source>
        <dbReference type="PDB" id="1FDY"/>
    </source>
</evidence>
<evidence type="ECO:0007744" key="20">
    <source>
        <dbReference type="PDB" id="1FDZ"/>
    </source>
</evidence>
<evidence type="ECO:0007744" key="21">
    <source>
        <dbReference type="PDB" id="1HL2"/>
    </source>
</evidence>
<evidence type="ECO:0007744" key="22">
    <source>
        <dbReference type="PDB" id="1NAL"/>
    </source>
</evidence>
<evidence type="ECO:0007744" key="23">
    <source>
        <dbReference type="PDB" id="2WKJ"/>
    </source>
</evidence>
<evidence type="ECO:0007744" key="24">
    <source>
        <dbReference type="PDB" id="4BWL"/>
    </source>
</evidence>
<evidence type="ECO:0007829" key="25">
    <source>
        <dbReference type="PDB" id="2WKJ"/>
    </source>
</evidence>
<evidence type="ECO:0007829" key="26">
    <source>
        <dbReference type="PDB" id="4BWL"/>
    </source>
</evidence>
<sequence length="297" mass="32593">MATNLRGVMAALLTPFDQQQALDKASLRRLVQFNIQQGIDGLYVGGSTGEAFVQSLSEREQVLEIVAEEAKGKIKLIAHVGCVSTAESQQLAASAKRYGFDAVSAVTPFYYPFSFEEHCDHYRAIIDSADGLPMVVYNIPALSGVKLTLDQINTLVTLPGVGALKQTSGDLYQMEQIRREHPDLVLYNGYDEIFASGLLAGADGGIGSTYNIMGWRYQGIVKALKEGDIQTAQKLQTECNKVIDLLIKTGVFRGLKTVLHYMDVVSVPLCRKPFGPVDEKYLPELKALAQQLMQERG</sequence>
<accession>P0A6L4</accession>
<accession>P06995</accession>
<accession>Q2M8Y8</accession>
<reference key="1">
    <citation type="journal article" date="1985" name="Nucleic Acids Res.">
        <title>Complete nucleotide sequence of the E. coli N-acetylneuraminate lyase.</title>
        <authorList>
            <person name="Ohta Y."/>
            <person name="Watanabe K."/>
            <person name="Kimura A."/>
        </authorList>
    </citation>
    <scope>NUCLEOTIDE SEQUENCE [GENOMIC DNA]</scope>
    <scope>PARTIAL PROTEIN SEQUENCE</scope>
    <source>
        <strain>K12</strain>
    </source>
</reference>
<reference key="2">
    <citation type="journal article" date="1986" name="Agric. Biol. Chem.">
        <title>Nucleotide sequence of the N-acetylneuraminate lyase gene of Escherichia coli.</title>
        <authorList>
            <person name="Kawakami B."/>
            <person name="Kudo T."/>
            <person name="Narahashi Y."/>
            <person name="Horikoshi K."/>
        </authorList>
    </citation>
    <scope>NUCLEOTIDE SEQUENCE [GENOMIC DNA]</scope>
    <source>
        <strain>JE1011</strain>
    </source>
</reference>
<reference key="3">
    <citation type="journal article" date="1997" name="Science">
        <title>The complete genome sequence of Escherichia coli K-12.</title>
        <authorList>
            <person name="Blattner F.R."/>
            <person name="Plunkett G. III"/>
            <person name="Bloch C.A."/>
            <person name="Perna N.T."/>
            <person name="Burland V."/>
            <person name="Riley M."/>
            <person name="Collado-Vides J."/>
            <person name="Glasner J.D."/>
            <person name="Rode C.K."/>
            <person name="Mayhew G.F."/>
            <person name="Gregor J."/>
            <person name="Davis N.W."/>
            <person name="Kirkpatrick H.A."/>
            <person name="Goeden M.A."/>
            <person name="Rose D.J."/>
            <person name="Mau B."/>
            <person name="Shao Y."/>
        </authorList>
    </citation>
    <scope>NUCLEOTIDE SEQUENCE [LARGE SCALE GENOMIC DNA]</scope>
    <source>
        <strain>K12 / MG1655 / ATCC 47076</strain>
    </source>
</reference>
<reference key="4">
    <citation type="journal article" date="2006" name="Mol. Syst. Biol.">
        <title>Highly accurate genome sequences of Escherichia coli K-12 strains MG1655 and W3110.</title>
        <authorList>
            <person name="Hayashi K."/>
            <person name="Morooka N."/>
            <person name="Yamamoto Y."/>
            <person name="Fujita K."/>
            <person name="Isono K."/>
            <person name="Choi S."/>
            <person name="Ohtsubo E."/>
            <person name="Baba T."/>
            <person name="Wanner B.L."/>
            <person name="Mori H."/>
            <person name="Horiuchi T."/>
        </authorList>
    </citation>
    <scope>NUCLEOTIDE SEQUENCE [LARGE SCALE GENOMIC DNA]</scope>
    <source>
        <strain>K12 / W3110 / ATCC 27325 / DSM 5911</strain>
    </source>
</reference>
<reference key="5">
    <citation type="journal article" date="1991" name="Biochem. J.">
        <title>Purification, crystallization and characterization of N-acetylneuraminate lyase from Escherichia coli.</title>
        <authorList>
            <person name="Aisaka K."/>
            <person name="Igarashi A."/>
            <person name="Yamaguchi K."/>
            <person name="Uwajima T."/>
        </authorList>
    </citation>
    <scope>PROTEIN SEQUENCE OF 2-24</scope>
    <scope>FUNCTION</scope>
    <scope>CATALYTIC ACTIVITY</scope>
    <scope>ACTIVITY REGULATION</scope>
    <scope>BIOPHYSICOCHEMICAL PROPERTIES</scope>
    <source>
        <strain>K12 / C600 / SF8</strain>
    </source>
</reference>
<reference key="6">
    <citation type="journal article" date="1997" name="Electrophoresis">
        <title>Escherichia coli proteome analysis using the gene-protein database.</title>
        <authorList>
            <person name="VanBogelen R.A."/>
            <person name="Abshire K.Z."/>
            <person name="Moldover B."/>
            <person name="Olson E.R."/>
            <person name="Neidhardt F.C."/>
        </authorList>
    </citation>
    <scope>IDENTIFICATION BY 2D-GEL</scope>
</reference>
<reference key="7">
    <citation type="journal article" date="2013" name="J. Bacteriol.">
        <title>Control of the Escherichia coli sialoregulon by transcriptional repressor NanR.</title>
        <authorList>
            <person name="Kalivoda K.A."/>
            <person name="Steenbergen S.M."/>
            <person name="Vimr E.R."/>
        </authorList>
    </citation>
    <scope>INDUCTION</scope>
</reference>
<reference key="8">
    <citation type="journal article" date="2021" name="J. Biol. Chem.">
        <title>The metalloprotein YhcH is an anomerase providing N-acetylneuraminate aldolase with the open form of its substrate.</title>
        <authorList>
            <person name="Kentache T."/>
            <person name="Thabault L."/>
            <person name="Deumer G."/>
            <person name="Haufroid V."/>
            <person name="Frederick R."/>
            <person name="Linster C.L."/>
            <person name="Peracchi A."/>
            <person name="Veiga-da-Cunha M."/>
            <person name="Bommer G.T."/>
            <person name="Van Schaftingen E."/>
        </authorList>
    </citation>
    <scope>FUNCTION</scope>
    <scope>CATALYTIC ACTIVITY</scope>
    <scope>ACTIVITY REGULATION</scope>
    <source>
        <strain>K12</strain>
    </source>
</reference>
<reference evidence="22" key="9">
    <citation type="journal article" date="1994" name="Structure">
        <title>The three-dimensional structure of N-acetylneuraminate lyase from Escherichia coli.</title>
        <authorList>
            <person name="Izard T."/>
            <person name="Lawrence M.C."/>
            <person name="Malby R.L."/>
            <person name="Lilley G.G."/>
            <person name="Colman P.M."/>
        </authorList>
    </citation>
    <scope>X-RAY CRYSTALLOGRAPHY (2.2 ANGSTROMS)</scope>
    <scope>SUBUNIT</scope>
    <scope>ACTIVE SITE</scope>
</reference>
<reference evidence="19 20" key="10">
    <citation type="journal article" date="1997" name="J. Mol. Biol.">
        <title>Structure and mechanism of a sub-family of enzymes related to N-acetylneuraminate lyase.</title>
        <authorList>
            <person name="Lawrence M.C."/>
            <person name="Barbosa J.A.R.G."/>
            <person name="Smith B.J."/>
            <person name="Hall N.E."/>
            <person name="Pilling P.A."/>
            <person name="Ooi H.C."/>
            <person name="Marcuccio S.M."/>
        </authorList>
    </citation>
    <scope>X-RAY CRYSTALLOGRAPHY (2.45 ANGSTROMS) OF COMPLEXES WITH HYDROXYPYRUVATE AND PYRUVATE</scope>
    <scope>ACTIVITY REGULATION</scope>
    <scope>SUBUNIT</scope>
    <scope>ACTIVE SITE</scope>
</reference>
<reference evidence="21" key="11">
    <citation type="journal article" date="2003" name="Proc. Natl. Acad. Sci. U.S.A.">
        <title>Mimicking natural evolution in vitro: an N-acetylneuraminate lyase mutant with an increased dihydrodipicolinate synthase activity.</title>
        <authorList>
            <person name="Joerger A.C."/>
            <person name="Mayer S."/>
            <person name="Fersht A.R."/>
        </authorList>
    </citation>
    <scope>X-RAY CRYSTALLOGRAPHY (1.80 ANGSTROMS) OF MUTANT ARG-142 IN COMPLEX WITH 3-HYDROXYPYRUVATE</scope>
    <scope>FUNCTION</scope>
    <scope>CATALYTIC ACTIVITY</scope>
    <scope>ACTIVITY REGULATION</scope>
    <scope>BIOPHYSICOCHEMICAL PROPERTIES</scope>
    <scope>SUBUNIT</scope>
    <scope>MUTAGENESIS OF LEU-142</scope>
    <scope>ACTIVE SITE</scope>
</reference>
<reference evidence="23" key="12">
    <citation type="journal article" date="2009" name="Acta Crystallogr. F Struct. Biol. Commun.">
        <title>Structure of an Escherichia coli N-acetyl-D-neuraminic acid lyase mutant, E192N, in complex with pyruvate at 1.45 angstrom resolution.</title>
        <authorList>
            <person name="Campeotto I."/>
            <person name="Carr S.B."/>
            <person name="Trinh C.H."/>
            <person name="Nelson A.S."/>
            <person name="Berry A."/>
            <person name="Phillips S.E."/>
            <person name="Pearson A.R."/>
        </authorList>
    </citation>
    <scope>X-RAY CRYSTALLOGRAPHY (1.45 ANGSTROMS) OF 2-296 OF MUTANT ASN-192 IN COMPLEX WITH PYRUVATE</scope>
    <scope>SUBUNIT</scope>
    <scope>ACTIVE SITE</scope>
    <scope>MUTAGENESIS OF GLU-192</scope>
</reference>
<reference evidence="24" key="13">
    <citation type="journal article" date="2014" name="ACS Chem. Biol.">
        <title>Reaction mechanism of N-acetylneuraminic acid lyase revealed by a combination of crystallography, QM/MM simulation, and mutagenesis.</title>
        <authorList>
            <person name="Daniels A.D."/>
            <person name="Campeotto I."/>
            <person name="van der Kamp M.W."/>
            <person name="Bolt A.H."/>
            <person name="Trinh C.H."/>
            <person name="Phillips S.E."/>
            <person name="Pearson A.R."/>
            <person name="Nelson A."/>
            <person name="Mulholland A.J."/>
            <person name="Berry A."/>
        </authorList>
    </citation>
    <scope>X-RAY CRYSTALLOGRAPHY (2.00 ANGSTROMS) OF 2-297 OF MUTANT ALA-137 IN COMPLEX WITH N-ACETYLNEURAMINIC ACID AND N-ACETYL-D-MANNOSAMINE</scope>
    <scope>FUNCTION</scope>
    <scope>CATALYTIC ACTIVITY</scope>
    <scope>BIOPHYSICOCHEMICAL PROPERTIES</scope>
    <scope>SUBUNIT</scope>
    <scope>ACTIVE SITE</scope>
    <scope>MUTAGENESIS OF SER-47; THR-48; TYR-110; TYR-137; THR-167 AND PHE-252</scope>
</reference>
<protein>
    <recommendedName>
        <fullName evidence="11">N-acetylneuraminate lyase</fullName>
        <shortName evidence="10">AcNeu lyase</shortName>
        <shortName evidence="13">NAL</shortName>
        <shortName evidence="12">Neu5Ac lyase</shortName>
        <ecNumber evidence="2 3 6 7">4.1.3.3</ecNumber>
    </recommendedName>
    <alternativeName>
        <fullName evidence="11">N-acetylneuraminate pyruvate-lyase</fullName>
    </alternativeName>
    <alternativeName>
        <fullName evidence="11">N-acetylneuraminic acid aldolase</fullName>
    </alternativeName>
    <alternativeName>
        <fullName evidence="14">NALase</fullName>
    </alternativeName>
    <alternativeName>
        <fullName>Sialate lyase</fullName>
    </alternativeName>
    <alternativeName>
        <fullName>Sialic acid aldolase</fullName>
    </alternativeName>
    <alternativeName>
        <fullName>Sialic acid lyase</fullName>
    </alternativeName>
</protein>
<name>NANA_ECOLI</name>
<feature type="initiator methionine" description="Removed" evidence="3">
    <location>
        <position position="1"/>
    </location>
</feature>
<feature type="chain" id="PRO_0000103209" description="N-acetylneuraminate lyase">
    <location>
        <begin position="2"/>
        <end position="297"/>
    </location>
</feature>
<feature type="active site" description="Proton donor" evidence="17">
    <location>
        <position position="137"/>
    </location>
</feature>
<feature type="active site" description="Schiff-base intermediate with substrate" evidence="2 4 6 9 18">
    <location>
        <position position="165"/>
    </location>
</feature>
<feature type="binding site" evidence="6 24">
    <location>
        <position position="47"/>
    </location>
    <ligand>
        <name>aceneuramate</name>
        <dbReference type="ChEBI" id="CHEBI:173083"/>
    </ligand>
</feature>
<feature type="binding site" evidence="9 16 19 20 21">
    <location>
        <position position="47"/>
    </location>
    <ligand>
        <name>pyruvate</name>
        <dbReference type="ChEBI" id="CHEBI:15361"/>
    </ligand>
</feature>
<feature type="binding site" evidence="6 24">
    <location>
        <position position="48"/>
    </location>
    <ligand>
        <name>aceneuramate</name>
        <dbReference type="ChEBI" id="CHEBI:173083"/>
    </ligand>
</feature>
<feature type="binding site" evidence="9 16 19 20 21">
    <location>
        <position position="48"/>
    </location>
    <ligand>
        <name>pyruvate</name>
        <dbReference type="ChEBI" id="CHEBI:15361"/>
    </ligand>
</feature>
<feature type="binding site" evidence="6 24">
    <location>
        <position position="167"/>
    </location>
    <ligand>
        <name>aceneuramate</name>
        <dbReference type="ChEBI" id="CHEBI:173083"/>
    </ligand>
</feature>
<feature type="binding site" evidence="6 24">
    <location>
        <position position="167"/>
    </location>
    <ligand>
        <name>aldehydo-N-acetyl-D-mannosamine</name>
        <dbReference type="ChEBI" id="CHEBI:17122"/>
    </ligand>
</feature>
<feature type="binding site" evidence="6 24">
    <location>
        <position position="189"/>
    </location>
    <ligand>
        <name>aceneuramate</name>
        <dbReference type="ChEBI" id="CHEBI:173083"/>
    </ligand>
</feature>
<feature type="binding site" evidence="6 24">
    <location>
        <position position="189"/>
    </location>
    <ligand>
        <name>aldehydo-N-acetyl-D-mannosamine</name>
        <dbReference type="ChEBI" id="CHEBI:17122"/>
    </ligand>
</feature>
<feature type="binding site" evidence="6 24">
    <location>
        <position position="191"/>
    </location>
    <ligand>
        <name>aceneuramate</name>
        <dbReference type="ChEBI" id="CHEBI:173083"/>
    </ligand>
</feature>
<feature type="binding site" evidence="6 24">
    <location>
        <position position="191"/>
    </location>
    <ligand>
        <name>aldehydo-N-acetyl-D-mannosamine</name>
        <dbReference type="ChEBI" id="CHEBI:17122"/>
    </ligand>
</feature>
<feature type="binding site" evidence="6 24">
    <location>
        <position position="192"/>
    </location>
    <ligand>
        <name>aceneuramate</name>
        <dbReference type="ChEBI" id="CHEBI:173083"/>
    </ligand>
</feature>
<feature type="binding site" evidence="6 24">
    <location>
        <position position="192"/>
    </location>
    <ligand>
        <name>aldehydo-N-acetyl-D-mannosamine</name>
        <dbReference type="ChEBI" id="CHEBI:17122"/>
    </ligand>
</feature>
<feature type="binding site" evidence="6 24">
    <location>
        <position position="208"/>
    </location>
    <ligand>
        <name>aceneuramate</name>
        <dbReference type="ChEBI" id="CHEBI:173083"/>
    </ligand>
</feature>
<feature type="binding site" evidence="6 24">
    <location>
        <position position="208"/>
    </location>
    <ligand>
        <name>aldehydo-N-acetyl-D-mannosamine</name>
        <dbReference type="ChEBI" id="CHEBI:17122"/>
    </ligand>
</feature>
<feature type="site" description="Required to correctly position the proton donor" evidence="17">
    <location>
        <position position="47"/>
    </location>
</feature>
<feature type="site" description="Required to correctly position the proton donor" evidence="17">
    <location>
        <position position="110"/>
    </location>
</feature>
<feature type="mutagenesis site" description="21-fold decrease in catalytic efficiency for the cleavage of Neu5Ac." evidence="6">
    <original>S</original>
    <variation>A</variation>
    <location>
        <position position="47"/>
    </location>
</feature>
<feature type="mutagenesis site" description="40-fold decrease in catalytic efficiency for the cleavage of Neu5Ac." evidence="6">
    <original>S</original>
    <variation>C</variation>
    <location>
        <position position="47"/>
    </location>
</feature>
<feature type="mutagenesis site" description="No significant change in kinetic parameters for the cleavage of Neu5Ac." evidence="6">
    <original>S</original>
    <variation>T</variation>
    <location>
        <position position="47"/>
    </location>
</feature>
<feature type="mutagenesis site" description="Slight increase in catalytic efficiency for the cleavage of Neu5Ac." evidence="6">
    <original>T</original>
    <variation>A</variation>
    <variation>S</variation>
    <location>
        <position position="48"/>
    </location>
</feature>
<feature type="mutagenesis site" description="40-fold decrease in catalytic efficiency for the cleavage of Neu5Ac." evidence="6">
    <original>Y</original>
    <variation>A</variation>
    <location>
        <position position="110"/>
    </location>
</feature>
<feature type="mutagenesis site" description="No significant change in kinetic parameters for the cleavage of Neu5Ac." evidence="6">
    <original>Y</original>
    <variation>F</variation>
    <location>
        <position position="110"/>
    </location>
</feature>
<feature type="mutagenesis site" description="Loss of Neu5Ac cleavage activity. Is still able to form a Schiff base with the substrate." evidence="6">
    <original>Y</original>
    <variation>A</variation>
    <location>
        <position position="137"/>
    </location>
</feature>
<feature type="mutagenesis site" description="Retains very low Neu5Ac cleavage activity." evidence="6">
    <original>Y</original>
    <variation>F</variation>
    <location>
        <position position="137"/>
    </location>
</feature>
<feature type="mutagenesis site" description="Changes substrate preference. Maintains much of its original N-acetylneuraminate lyase activity, but shows a 19-fold increase in condensation of L-aspartate beta-semialdehyde (L-ASA) and pyruvate." evidence="2">
    <original>L</original>
    <variation>R</variation>
    <location>
        <position position="142"/>
    </location>
</feature>
<feature type="mutagenesis site" description="4-fold decrease in catalytic efficiency for the cleavage of Neu5Ac." evidence="6">
    <original>T</original>
    <variation>A</variation>
    <location>
        <position position="167"/>
    </location>
</feature>
<feature type="mutagenesis site" description="No significant change in kinetic parameters for the cleavage of Neu5Ac." evidence="6">
    <original>T</original>
    <variation>S</variation>
    <location>
        <position position="167"/>
    </location>
</feature>
<feature type="mutagenesis site" description="6-fold higher specificity for dipropylaminocarbonyl-substituted derivatives." evidence="4">
    <original>E</original>
    <variation>N</variation>
    <location>
        <position position="192"/>
    </location>
</feature>
<feature type="mutagenesis site" description="No significant change in kinetic parameters for the cleavage of Neu5Ac." evidence="6">
    <original>F</original>
    <variation>A</variation>
    <variation>Y</variation>
    <location>
        <position position="252"/>
    </location>
</feature>
<feature type="sequence conflict" description="In Ref. 1; CAA27051." evidence="15" ref="1">
    <original>A</original>
    <variation>G</variation>
    <location>
        <position position="70"/>
    </location>
</feature>
<feature type="sequence conflict" description="In Ref. 1; CAA27051." evidence="15" ref="1">
    <original>S</original>
    <variation>T</variation>
    <location>
        <position position="84"/>
    </location>
</feature>
<feature type="sequence conflict" description="In Ref. 1; CAA27051." evidence="15" ref="1">
    <original>L</original>
    <variation>Q</variation>
    <location>
        <position position="282"/>
    </location>
</feature>
<feature type="helix" evidence="25">
    <location>
        <begin position="2"/>
        <end position="5"/>
    </location>
</feature>
<feature type="strand" evidence="25">
    <location>
        <begin position="7"/>
        <end position="11"/>
    </location>
</feature>
<feature type="strand" evidence="25">
    <location>
        <begin position="20"/>
        <end position="22"/>
    </location>
</feature>
<feature type="helix" evidence="25">
    <location>
        <begin position="24"/>
        <end position="36"/>
    </location>
</feature>
<feature type="strand" evidence="25">
    <location>
        <begin position="40"/>
        <end position="46"/>
    </location>
</feature>
<feature type="turn" evidence="25">
    <location>
        <begin position="47"/>
        <end position="50"/>
    </location>
</feature>
<feature type="helix" evidence="25">
    <location>
        <begin position="51"/>
        <end position="53"/>
    </location>
</feature>
<feature type="helix" evidence="25">
    <location>
        <begin position="56"/>
        <end position="70"/>
    </location>
</feature>
<feature type="turn" evidence="25">
    <location>
        <begin position="71"/>
        <end position="73"/>
    </location>
</feature>
<feature type="strand" evidence="25">
    <location>
        <begin position="74"/>
        <end position="79"/>
    </location>
</feature>
<feature type="helix" evidence="25">
    <location>
        <begin position="85"/>
        <end position="98"/>
    </location>
</feature>
<feature type="strand" evidence="25">
    <location>
        <begin position="101"/>
        <end position="106"/>
    </location>
</feature>
<feature type="helix" evidence="25">
    <location>
        <begin position="115"/>
        <end position="129"/>
    </location>
</feature>
<feature type="strand" evidence="25">
    <location>
        <begin position="134"/>
        <end position="138"/>
    </location>
</feature>
<feature type="helix" evidence="25">
    <location>
        <begin position="140"/>
        <end position="143"/>
    </location>
</feature>
<feature type="helix" evidence="25">
    <location>
        <begin position="149"/>
        <end position="156"/>
    </location>
</feature>
<feature type="strand" evidence="25">
    <location>
        <begin position="161"/>
        <end position="166"/>
    </location>
</feature>
<feature type="helix" evidence="25">
    <location>
        <begin position="171"/>
        <end position="180"/>
    </location>
</feature>
<feature type="strand" evidence="25">
    <location>
        <begin position="185"/>
        <end position="188"/>
    </location>
</feature>
<feature type="helix" evidence="25">
    <location>
        <begin position="191"/>
        <end position="193"/>
    </location>
</feature>
<feature type="helix" evidence="25">
    <location>
        <begin position="194"/>
        <end position="200"/>
    </location>
</feature>
<feature type="strand" evidence="25">
    <location>
        <begin position="204"/>
        <end position="207"/>
    </location>
</feature>
<feature type="helix" evidence="25">
    <location>
        <begin position="210"/>
        <end position="226"/>
    </location>
</feature>
<feature type="helix" evidence="25">
    <location>
        <begin position="229"/>
        <end position="249"/>
    </location>
</feature>
<feature type="helix" evidence="25">
    <location>
        <begin position="251"/>
        <end position="261"/>
    </location>
</feature>
<feature type="strand" evidence="26">
    <location>
        <begin position="265"/>
        <end position="267"/>
    </location>
</feature>
<feature type="helix" evidence="25">
    <location>
        <begin position="279"/>
        <end position="281"/>
    </location>
</feature>
<feature type="helix" evidence="25">
    <location>
        <begin position="282"/>
        <end position="295"/>
    </location>
</feature>
<gene>
    <name evidence="14" type="primary">nanA</name>
    <name evidence="11" type="synonym">npl</name>
    <name type="ordered locus">b3225</name>
    <name type="ordered locus">JW3194</name>
</gene>